<gene>
    <name evidence="1" type="primary">tmcA</name>
    <name type="ordered locus">Tpen_0686</name>
</gene>
<dbReference type="EC" id="2.3.1.193" evidence="1"/>
<dbReference type="EMBL" id="CP000505">
    <property type="protein sequence ID" value="ABL78088.1"/>
    <property type="molecule type" value="Genomic_DNA"/>
</dbReference>
<dbReference type="RefSeq" id="WP_011752353.1">
    <property type="nucleotide sequence ID" value="NC_008698.1"/>
</dbReference>
<dbReference type="SMR" id="A1RY08"/>
<dbReference type="STRING" id="368408.Tpen_0686"/>
<dbReference type="EnsemblBacteria" id="ABL78088">
    <property type="protein sequence ID" value="ABL78088"/>
    <property type="gene ID" value="Tpen_0686"/>
</dbReference>
<dbReference type="GeneID" id="4601886"/>
<dbReference type="KEGG" id="tpe:Tpen_0686"/>
<dbReference type="eggNOG" id="arCOG01951">
    <property type="taxonomic scope" value="Archaea"/>
</dbReference>
<dbReference type="HOGENOM" id="CLU_004652_1_0_2"/>
<dbReference type="OrthoDB" id="312894at2157"/>
<dbReference type="Proteomes" id="UP000000641">
    <property type="component" value="Chromosome"/>
</dbReference>
<dbReference type="GO" id="GO:0005737">
    <property type="term" value="C:cytoplasm"/>
    <property type="evidence" value="ECO:0007669"/>
    <property type="project" value="UniProtKB-SubCell"/>
</dbReference>
<dbReference type="GO" id="GO:1990883">
    <property type="term" value="F:18S rRNA cytidine N-acetyltransferase activity"/>
    <property type="evidence" value="ECO:0007669"/>
    <property type="project" value="TreeGrafter"/>
</dbReference>
<dbReference type="GO" id="GO:0005524">
    <property type="term" value="F:ATP binding"/>
    <property type="evidence" value="ECO:0007669"/>
    <property type="project" value="UniProtKB-UniRule"/>
</dbReference>
<dbReference type="GO" id="GO:0000049">
    <property type="term" value="F:tRNA binding"/>
    <property type="evidence" value="ECO:0007669"/>
    <property type="project" value="UniProtKB-UniRule"/>
</dbReference>
<dbReference type="GO" id="GO:0051392">
    <property type="term" value="F:tRNA N4-acetyltransferase activity"/>
    <property type="evidence" value="ECO:0007669"/>
    <property type="project" value="UniProtKB-UniRule"/>
</dbReference>
<dbReference type="GO" id="GO:1904812">
    <property type="term" value="P:rRNA acetylation involved in maturation of SSU-rRNA"/>
    <property type="evidence" value="ECO:0007669"/>
    <property type="project" value="TreeGrafter"/>
</dbReference>
<dbReference type="GO" id="GO:0051391">
    <property type="term" value="P:tRNA acetylation"/>
    <property type="evidence" value="ECO:0007669"/>
    <property type="project" value="UniProtKB-UniRule"/>
</dbReference>
<dbReference type="GO" id="GO:0002101">
    <property type="term" value="P:tRNA wobble cytosine modification"/>
    <property type="evidence" value="ECO:0007669"/>
    <property type="project" value="UniProtKB-UniRule"/>
</dbReference>
<dbReference type="CDD" id="cd04301">
    <property type="entry name" value="NAT_SF"/>
    <property type="match status" value="1"/>
</dbReference>
<dbReference type="FunFam" id="3.40.50.300:FF:002218">
    <property type="entry name" value="tRNA(Met) cytidine acetyltransferase TmcA"/>
    <property type="match status" value="1"/>
</dbReference>
<dbReference type="Gene3D" id="3.40.50.11040">
    <property type="match status" value="1"/>
</dbReference>
<dbReference type="Gene3D" id="3.40.630.30">
    <property type="match status" value="1"/>
</dbReference>
<dbReference type="Gene3D" id="3.40.50.300">
    <property type="entry name" value="P-loop containing nucleotide triphosphate hydrolases"/>
    <property type="match status" value="1"/>
</dbReference>
<dbReference type="HAMAP" id="MF_01886">
    <property type="entry name" value="tRNA_acetyltr_TmcA"/>
    <property type="match status" value="1"/>
</dbReference>
<dbReference type="InterPro" id="IPR016181">
    <property type="entry name" value="Acyl_CoA_acyltransferase"/>
</dbReference>
<dbReference type="InterPro" id="IPR000182">
    <property type="entry name" value="GNAT_dom"/>
</dbReference>
<dbReference type="InterPro" id="IPR007807">
    <property type="entry name" value="NAT10/TcmA_helicase"/>
</dbReference>
<dbReference type="InterPro" id="IPR027417">
    <property type="entry name" value="P-loop_NTPase"/>
</dbReference>
<dbReference type="InterPro" id="IPR032672">
    <property type="entry name" value="TmcA/NAT10/Kre33"/>
</dbReference>
<dbReference type="InterPro" id="IPR013562">
    <property type="entry name" value="TmcA_N"/>
</dbReference>
<dbReference type="InterPro" id="IPR024914">
    <property type="entry name" value="tRNA_acetyltr_TmcA"/>
</dbReference>
<dbReference type="PANTHER" id="PTHR10925">
    <property type="entry name" value="N-ACETYLTRANSFERASE 10"/>
    <property type="match status" value="1"/>
</dbReference>
<dbReference type="PANTHER" id="PTHR10925:SF5">
    <property type="entry name" value="RNA CYTIDINE ACETYLTRANSFERASE"/>
    <property type="match status" value="1"/>
</dbReference>
<dbReference type="Pfam" id="PF13718">
    <property type="entry name" value="GNAT_acetyltr_2"/>
    <property type="match status" value="2"/>
</dbReference>
<dbReference type="Pfam" id="PF05127">
    <property type="entry name" value="NAT10_TcmA_helicase"/>
    <property type="match status" value="1"/>
</dbReference>
<dbReference type="Pfam" id="PF08351">
    <property type="entry name" value="TmcA_N"/>
    <property type="match status" value="1"/>
</dbReference>
<dbReference type="SUPFAM" id="SSF55729">
    <property type="entry name" value="Acyl-CoA N-acyltransferases (Nat)"/>
    <property type="match status" value="1"/>
</dbReference>
<dbReference type="SUPFAM" id="SSF52540">
    <property type="entry name" value="P-loop containing nucleoside triphosphate hydrolases"/>
    <property type="match status" value="1"/>
</dbReference>
<dbReference type="PROSITE" id="PS51186">
    <property type="entry name" value="GNAT"/>
    <property type="match status" value="1"/>
</dbReference>
<keyword id="KW-0012">Acyltransferase</keyword>
<keyword id="KW-0067">ATP-binding</keyword>
<keyword id="KW-0963">Cytoplasm</keyword>
<keyword id="KW-0547">Nucleotide-binding</keyword>
<keyword id="KW-1185">Reference proteome</keyword>
<keyword id="KW-0694">RNA-binding</keyword>
<keyword id="KW-0808">Transferase</keyword>
<keyword id="KW-0819">tRNA processing</keyword>
<keyword id="KW-0820">tRNA-binding</keyword>
<feature type="chain" id="PRO_0000403134" description="tRNA(Met) cytidine acetyltransferase TmcA">
    <location>
        <begin position="1"/>
        <end position="801"/>
    </location>
</feature>
<feature type="domain" description="N-acetyltransferase" evidence="1">
    <location>
        <begin position="457"/>
        <end position="637"/>
    </location>
</feature>
<feature type="binding site" evidence="1">
    <location>
        <position position="228"/>
    </location>
    <ligand>
        <name>ATP</name>
        <dbReference type="ChEBI" id="CHEBI:30616"/>
    </ligand>
</feature>
<feature type="binding site" evidence="1">
    <location>
        <begin position="256"/>
        <end position="265"/>
    </location>
    <ligand>
        <name>ATP</name>
        <dbReference type="ChEBI" id="CHEBI:30616"/>
    </ligand>
</feature>
<feature type="binding site" evidence="1">
    <location>
        <position position="412"/>
    </location>
    <ligand>
        <name>ATP</name>
        <dbReference type="ChEBI" id="CHEBI:30616"/>
    </ligand>
</feature>
<feature type="binding site" evidence="1">
    <location>
        <begin position="562"/>
        <end position="564"/>
    </location>
    <ligand>
        <name>acetyl-CoA</name>
        <dbReference type="ChEBI" id="CHEBI:57288"/>
    </ligand>
</feature>
<feature type="binding site" evidence="1">
    <location>
        <begin position="569"/>
        <end position="575"/>
    </location>
    <ligand>
        <name>acetyl-CoA</name>
        <dbReference type="ChEBI" id="CHEBI:57288"/>
    </ligand>
</feature>
<feature type="binding site" evidence="1">
    <location>
        <position position="602"/>
    </location>
    <ligand>
        <name>acetyl-CoA</name>
        <dbReference type="ChEBI" id="CHEBI:57288"/>
    </ligand>
</feature>
<name>TMCA_THEPD</name>
<protein>
    <recommendedName>
        <fullName evidence="1">tRNA(Met) cytidine acetyltransferase TmcA</fullName>
        <ecNumber evidence="1">2.3.1.193</ecNumber>
    </recommendedName>
</protein>
<reference key="1">
    <citation type="journal article" date="2008" name="J. Bacteriol.">
        <title>Genome sequence of Thermofilum pendens reveals an exceptional loss of biosynthetic pathways without genome reduction.</title>
        <authorList>
            <person name="Anderson I."/>
            <person name="Rodriguez J."/>
            <person name="Susanti D."/>
            <person name="Porat I."/>
            <person name="Reich C."/>
            <person name="Ulrich L.E."/>
            <person name="Elkins J.G."/>
            <person name="Mavromatis K."/>
            <person name="Lykidis A."/>
            <person name="Kim E."/>
            <person name="Thompson L.S."/>
            <person name="Nolan M."/>
            <person name="Land M."/>
            <person name="Copeland A."/>
            <person name="Lapidus A."/>
            <person name="Lucas S."/>
            <person name="Detter C."/>
            <person name="Zhulin I.B."/>
            <person name="Olsen G.J."/>
            <person name="Whitman W."/>
            <person name="Mukhopadhyay B."/>
            <person name="Bristow J."/>
            <person name="Kyrpides N."/>
        </authorList>
    </citation>
    <scope>NUCLEOTIDE SEQUENCE [LARGE SCALE GENOMIC DNA]</scope>
    <source>
        <strain>DSM 2475 / Hrk 5</strain>
    </source>
</reference>
<proteinExistence type="inferred from homology"/>
<evidence type="ECO:0000255" key="1">
    <source>
        <dbReference type="HAMAP-Rule" id="MF_01886"/>
    </source>
</evidence>
<comment type="function">
    <text evidence="1">Catalyzes the formation of N(4)-acetylcytidine (ac(4)C) at the wobble position of tRNA(Met), by using acetyl-CoA as an acetyl donor and ATP (or GTP).</text>
</comment>
<comment type="catalytic activity">
    <reaction evidence="1">
        <text>cytidine(34) in elongator tRNA(Met) + acetyl-CoA + ATP + H2O = N(4)-acetylcytidine(34) in elongator tRNA(Met) + ADP + phosphate + CoA + H(+)</text>
        <dbReference type="Rhea" id="RHEA:43788"/>
        <dbReference type="Rhea" id="RHEA-COMP:10693"/>
        <dbReference type="Rhea" id="RHEA-COMP:10694"/>
        <dbReference type="ChEBI" id="CHEBI:15377"/>
        <dbReference type="ChEBI" id="CHEBI:15378"/>
        <dbReference type="ChEBI" id="CHEBI:30616"/>
        <dbReference type="ChEBI" id="CHEBI:43474"/>
        <dbReference type="ChEBI" id="CHEBI:57287"/>
        <dbReference type="ChEBI" id="CHEBI:57288"/>
        <dbReference type="ChEBI" id="CHEBI:74900"/>
        <dbReference type="ChEBI" id="CHEBI:82748"/>
        <dbReference type="ChEBI" id="CHEBI:456216"/>
        <dbReference type="EC" id="2.3.1.193"/>
    </reaction>
</comment>
<comment type="subcellular location">
    <subcellularLocation>
        <location evidence="1">Cytoplasm</location>
    </subcellularLocation>
</comment>
<comment type="similarity">
    <text evidence="1">Belongs to the RNA cytidine acetyltransferase family. TmcA subfamily.</text>
</comment>
<organism>
    <name type="scientific">Thermofilum pendens (strain DSM 2475 / Hrk 5)</name>
    <dbReference type="NCBI Taxonomy" id="368408"/>
    <lineage>
        <taxon>Archaea</taxon>
        <taxon>Thermoproteota</taxon>
        <taxon>Thermoprotei</taxon>
        <taxon>Thermofilales</taxon>
        <taxon>Thermofilaceae</taxon>
        <taxon>Thermofilum</taxon>
    </lineage>
</organism>
<accession>A1RY08</accession>
<sequence>MPLVPLEHLDEVREELVKARKSRHRRLLVITGDDDSRLVTTALDFIYNVKDLLSGEKVLYTYHAFYSDGAMRKELFEKGVPRELSVDYVSYHKLDEVLGRTYAAAVADLVNNLEPNDLGRVMGVVEGGGLYIFLLPSFTRLLETVTRFQSNLIVPGYTDKDLKRYFEKRFIKKVMEHQGVAVYDADNRYWVKKFGKTPSTPYARPKPVLPQKSKIPVKVFNLALTQDQVEVLKIFEHFYAKAEKEKLVFVLTADRGRGKSSAVGLGVGWLAHRLRRAKGKCKVVVTAPAVTNVQEVFRFSAAVLDLFKHKVEVLEDESGMITKLLSKGIEIEYVTPLDVLKAKGDLLVVDEAASIPVPLLFKMLKRFNKVVYSSTIHGYEGAGRGFSLRFLKRLKNEEGVKLYEYEMSEPIRYAPEDPIEKWTFDLLLLDAEPCEITEDDLSLVSAGEVYYDAPNEEELFLKNEEELRQFFGIYIMAHYRNNPNDLGIMMDAPHHFLRMVRLKNGKIVVSLELASEGNLGEDLSKESAKGAWLMGNIIPDRLIKHYKILDFGNLRGIRVVRIATHPSVMGKGLGSFALSRLEEEARRNGYDWVGAGFGVTYELLKFWLKNGYIPVHMSPEKNPVSGEYTVIVVKPLSEKAKRIVDVIAKEFKQKLLGSLASPYFDLEPEVALLLLKSTPSFEVKVNLTKLQLARFLTYAWSDMTLENCIDVVGIMTRLYFLSKKKPSLSELQELLLVSKILQAKSWHLTCQELNLSLAEATSNMKQIAQIFSKEFLGVNSEEEALRYFFLRMDDLNEGVSA</sequence>